<comment type="function">
    <text evidence="1">One of the primary rRNA binding proteins, this protein initially binds near the 5'-end of the 23S rRNA. It is important during the early stages of 50S assembly. It makes multiple contacts with different domains of the 23S rRNA in the assembled 50S subunit and ribosome.</text>
</comment>
<comment type="function">
    <text evidence="1">Forms part of the polypeptide exit tunnel.</text>
</comment>
<comment type="subunit">
    <text evidence="1">Part of the 50S ribosomal subunit.</text>
</comment>
<comment type="similarity">
    <text evidence="1">Belongs to the universal ribosomal protein uL4 family.</text>
</comment>
<feature type="chain" id="PRO_1000142179" description="Large ribosomal subunit protein uL4">
    <location>
        <begin position="1"/>
        <end position="201"/>
    </location>
</feature>
<feature type="region of interest" description="Disordered" evidence="2">
    <location>
        <begin position="44"/>
        <end position="71"/>
    </location>
</feature>
<reference key="1">
    <citation type="journal article" date="2011" name="J. Bacteriol.">
        <title>Comparative genomics of 28 Salmonella enterica isolates: evidence for CRISPR-mediated adaptive sublineage evolution.</title>
        <authorList>
            <person name="Fricke W.F."/>
            <person name="Mammel M.K."/>
            <person name="McDermott P.F."/>
            <person name="Tartera C."/>
            <person name="White D.G."/>
            <person name="Leclerc J.E."/>
            <person name="Ravel J."/>
            <person name="Cebula T.A."/>
        </authorList>
    </citation>
    <scope>NUCLEOTIDE SEQUENCE [LARGE SCALE GENOMIC DNA]</scope>
    <source>
        <strain>CT_02021853</strain>
    </source>
</reference>
<accession>B5FJL3</accession>
<organism>
    <name type="scientific">Salmonella dublin (strain CT_02021853)</name>
    <dbReference type="NCBI Taxonomy" id="439851"/>
    <lineage>
        <taxon>Bacteria</taxon>
        <taxon>Pseudomonadati</taxon>
        <taxon>Pseudomonadota</taxon>
        <taxon>Gammaproteobacteria</taxon>
        <taxon>Enterobacterales</taxon>
        <taxon>Enterobacteriaceae</taxon>
        <taxon>Salmonella</taxon>
    </lineage>
</organism>
<sequence>MELVLKDAQSALTVSETTFGRDFNEALVHQVVVAYAAGARQGTRAQKTRAEVTGSGKKPWRQKGTGRARSGSIKSPIWRSGGVTFAARPQDHSQKVNKKMYRGALKSILSELVRQDRLIVVEKFSVEAPKTKLLAQKLKDMALEDVLIITGELDENLFLAARNLHKVDVRDATGIDPVSLIAFDKVVMTADAVKQVEEMLA</sequence>
<keyword id="KW-0687">Ribonucleoprotein</keyword>
<keyword id="KW-0689">Ribosomal protein</keyword>
<keyword id="KW-0694">RNA-binding</keyword>
<keyword id="KW-0699">rRNA-binding</keyword>
<proteinExistence type="inferred from homology"/>
<evidence type="ECO:0000255" key="1">
    <source>
        <dbReference type="HAMAP-Rule" id="MF_01328"/>
    </source>
</evidence>
<evidence type="ECO:0000256" key="2">
    <source>
        <dbReference type="SAM" id="MobiDB-lite"/>
    </source>
</evidence>
<evidence type="ECO:0000305" key="3"/>
<name>RL4_SALDC</name>
<gene>
    <name evidence="1" type="primary">rplD</name>
    <name type="ordered locus">SeD_A3806</name>
</gene>
<protein>
    <recommendedName>
        <fullName evidence="1">Large ribosomal subunit protein uL4</fullName>
    </recommendedName>
    <alternativeName>
        <fullName evidence="3">50S ribosomal protein L4</fullName>
    </alternativeName>
</protein>
<dbReference type="EMBL" id="CP001144">
    <property type="protein sequence ID" value="ACH75577.1"/>
    <property type="molecule type" value="Genomic_DNA"/>
</dbReference>
<dbReference type="RefSeq" id="WP_000424395.1">
    <property type="nucleotide sequence ID" value="NC_011205.1"/>
</dbReference>
<dbReference type="SMR" id="B5FJL3"/>
<dbReference type="GeneID" id="97442859"/>
<dbReference type="KEGG" id="sed:SeD_A3806"/>
<dbReference type="HOGENOM" id="CLU_041575_5_2_6"/>
<dbReference type="Proteomes" id="UP000008322">
    <property type="component" value="Chromosome"/>
</dbReference>
<dbReference type="GO" id="GO:1990904">
    <property type="term" value="C:ribonucleoprotein complex"/>
    <property type="evidence" value="ECO:0007669"/>
    <property type="project" value="UniProtKB-KW"/>
</dbReference>
<dbReference type="GO" id="GO:0005840">
    <property type="term" value="C:ribosome"/>
    <property type="evidence" value="ECO:0007669"/>
    <property type="project" value="UniProtKB-KW"/>
</dbReference>
<dbReference type="GO" id="GO:0019843">
    <property type="term" value="F:rRNA binding"/>
    <property type="evidence" value="ECO:0007669"/>
    <property type="project" value="UniProtKB-UniRule"/>
</dbReference>
<dbReference type="GO" id="GO:0003735">
    <property type="term" value="F:structural constituent of ribosome"/>
    <property type="evidence" value="ECO:0007669"/>
    <property type="project" value="InterPro"/>
</dbReference>
<dbReference type="GO" id="GO:0006412">
    <property type="term" value="P:translation"/>
    <property type="evidence" value="ECO:0007669"/>
    <property type="project" value="UniProtKB-UniRule"/>
</dbReference>
<dbReference type="FunFam" id="3.40.1370.10:FF:000001">
    <property type="entry name" value="50S ribosomal protein L4"/>
    <property type="match status" value="1"/>
</dbReference>
<dbReference type="Gene3D" id="3.40.1370.10">
    <property type="match status" value="1"/>
</dbReference>
<dbReference type="HAMAP" id="MF_01328_B">
    <property type="entry name" value="Ribosomal_uL4_B"/>
    <property type="match status" value="1"/>
</dbReference>
<dbReference type="InterPro" id="IPR002136">
    <property type="entry name" value="Ribosomal_uL4"/>
</dbReference>
<dbReference type="InterPro" id="IPR013005">
    <property type="entry name" value="Ribosomal_uL4-like"/>
</dbReference>
<dbReference type="InterPro" id="IPR023574">
    <property type="entry name" value="Ribosomal_uL4_dom_sf"/>
</dbReference>
<dbReference type="NCBIfam" id="TIGR03953">
    <property type="entry name" value="rplD_bact"/>
    <property type="match status" value="1"/>
</dbReference>
<dbReference type="PANTHER" id="PTHR10746">
    <property type="entry name" value="50S RIBOSOMAL PROTEIN L4"/>
    <property type="match status" value="1"/>
</dbReference>
<dbReference type="PANTHER" id="PTHR10746:SF6">
    <property type="entry name" value="LARGE RIBOSOMAL SUBUNIT PROTEIN UL4M"/>
    <property type="match status" value="1"/>
</dbReference>
<dbReference type="Pfam" id="PF00573">
    <property type="entry name" value="Ribosomal_L4"/>
    <property type="match status" value="1"/>
</dbReference>
<dbReference type="SUPFAM" id="SSF52166">
    <property type="entry name" value="Ribosomal protein L4"/>
    <property type="match status" value="1"/>
</dbReference>